<accession>Q9CK29</accession>
<feature type="chain" id="PRO_0000233811" description="Bifunctional protein GlmU">
    <location>
        <begin position="1"/>
        <end position="458"/>
    </location>
</feature>
<feature type="region of interest" description="Pyrophosphorylase" evidence="1">
    <location>
        <begin position="1"/>
        <end position="229"/>
    </location>
</feature>
<feature type="region of interest" description="Linker" evidence="1">
    <location>
        <begin position="230"/>
        <end position="250"/>
    </location>
</feature>
<feature type="region of interest" description="N-acetyltransferase" evidence="1">
    <location>
        <begin position="251"/>
        <end position="458"/>
    </location>
</feature>
<feature type="active site" description="Proton acceptor" evidence="1">
    <location>
        <position position="363"/>
    </location>
</feature>
<feature type="binding site" evidence="1">
    <location>
        <begin position="11"/>
        <end position="14"/>
    </location>
    <ligand>
        <name>UDP-N-acetyl-alpha-D-glucosamine</name>
        <dbReference type="ChEBI" id="CHEBI:57705"/>
    </ligand>
</feature>
<feature type="binding site" evidence="1">
    <location>
        <position position="25"/>
    </location>
    <ligand>
        <name>UDP-N-acetyl-alpha-D-glucosamine</name>
        <dbReference type="ChEBI" id="CHEBI:57705"/>
    </ligand>
</feature>
<feature type="binding site" evidence="1">
    <location>
        <position position="76"/>
    </location>
    <ligand>
        <name>UDP-N-acetyl-alpha-D-glucosamine</name>
        <dbReference type="ChEBI" id="CHEBI:57705"/>
    </ligand>
</feature>
<feature type="binding site" evidence="1">
    <location>
        <begin position="81"/>
        <end position="82"/>
    </location>
    <ligand>
        <name>UDP-N-acetyl-alpha-D-glucosamine</name>
        <dbReference type="ChEBI" id="CHEBI:57705"/>
    </ligand>
</feature>
<feature type="binding site" evidence="1">
    <location>
        <begin position="103"/>
        <end position="105"/>
    </location>
    <ligand>
        <name>UDP-N-acetyl-alpha-D-glucosamine</name>
        <dbReference type="ChEBI" id="CHEBI:57705"/>
    </ligand>
</feature>
<feature type="binding site" evidence="1">
    <location>
        <position position="105"/>
    </location>
    <ligand>
        <name>Mg(2+)</name>
        <dbReference type="ChEBI" id="CHEBI:18420"/>
    </ligand>
</feature>
<feature type="binding site" evidence="1">
    <location>
        <position position="140"/>
    </location>
    <ligand>
        <name>UDP-N-acetyl-alpha-D-glucosamine</name>
        <dbReference type="ChEBI" id="CHEBI:57705"/>
    </ligand>
</feature>
<feature type="binding site" evidence="1">
    <location>
        <position position="154"/>
    </location>
    <ligand>
        <name>UDP-N-acetyl-alpha-D-glucosamine</name>
        <dbReference type="ChEBI" id="CHEBI:57705"/>
    </ligand>
</feature>
<feature type="binding site" evidence="1">
    <location>
        <position position="169"/>
    </location>
    <ligand>
        <name>UDP-N-acetyl-alpha-D-glucosamine</name>
        <dbReference type="ChEBI" id="CHEBI:57705"/>
    </ligand>
</feature>
<feature type="binding site" evidence="1">
    <location>
        <position position="227"/>
    </location>
    <ligand>
        <name>Mg(2+)</name>
        <dbReference type="ChEBI" id="CHEBI:18420"/>
    </ligand>
</feature>
<feature type="binding site" evidence="1">
    <location>
        <position position="227"/>
    </location>
    <ligand>
        <name>UDP-N-acetyl-alpha-D-glucosamine</name>
        <dbReference type="ChEBI" id="CHEBI:57705"/>
    </ligand>
</feature>
<feature type="binding site" evidence="1">
    <location>
        <position position="333"/>
    </location>
    <ligand>
        <name>UDP-N-acetyl-alpha-D-glucosamine</name>
        <dbReference type="ChEBI" id="CHEBI:57705"/>
    </ligand>
</feature>
<feature type="binding site" evidence="1">
    <location>
        <position position="351"/>
    </location>
    <ligand>
        <name>UDP-N-acetyl-alpha-D-glucosamine</name>
        <dbReference type="ChEBI" id="CHEBI:57705"/>
    </ligand>
</feature>
<feature type="binding site" evidence="1">
    <location>
        <position position="366"/>
    </location>
    <ligand>
        <name>UDP-N-acetyl-alpha-D-glucosamine</name>
        <dbReference type="ChEBI" id="CHEBI:57705"/>
    </ligand>
</feature>
<feature type="binding site" evidence="1">
    <location>
        <position position="377"/>
    </location>
    <ligand>
        <name>UDP-N-acetyl-alpha-D-glucosamine</name>
        <dbReference type="ChEBI" id="CHEBI:57705"/>
    </ligand>
</feature>
<feature type="binding site" evidence="1">
    <location>
        <position position="380"/>
    </location>
    <ligand>
        <name>acetyl-CoA</name>
        <dbReference type="ChEBI" id="CHEBI:57288"/>
    </ligand>
</feature>
<feature type="binding site" evidence="1">
    <location>
        <begin position="386"/>
        <end position="387"/>
    </location>
    <ligand>
        <name>acetyl-CoA</name>
        <dbReference type="ChEBI" id="CHEBI:57288"/>
    </ligand>
</feature>
<feature type="binding site" evidence="1">
    <location>
        <position position="405"/>
    </location>
    <ligand>
        <name>acetyl-CoA</name>
        <dbReference type="ChEBI" id="CHEBI:57288"/>
    </ligand>
</feature>
<feature type="binding site" evidence="1">
    <location>
        <position position="423"/>
    </location>
    <ligand>
        <name>acetyl-CoA</name>
        <dbReference type="ChEBI" id="CHEBI:57288"/>
    </ligand>
</feature>
<feature type="binding site" evidence="1">
    <location>
        <position position="440"/>
    </location>
    <ligand>
        <name>acetyl-CoA</name>
        <dbReference type="ChEBI" id="CHEBI:57288"/>
    </ligand>
</feature>
<protein>
    <recommendedName>
        <fullName evidence="1">Bifunctional protein GlmU</fullName>
    </recommendedName>
    <domain>
        <recommendedName>
            <fullName evidence="1">UDP-N-acetylglucosamine pyrophosphorylase</fullName>
            <ecNumber evidence="1">2.7.7.23</ecNumber>
        </recommendedName>
        <alternativeName>
            <fullName evidence="1">N-acetylglucosamine-1-phosphate uridyltransferase</fullName>
        </alternativeName>
    </domain>
    <domain>
        <recommendedName>
            <fullName evidence="1">Glucosamine-1-phosphate N-acetyltransferase</fullName>
            <ecNumber evidence="1">2.3.1.157</ecNumber>
        </recommendedName>
    </domain>
</protein>
<evidence type="ECO:0000255" key="1">
    <source>
        <dbReference type="HAMAP-Rule" id="MF_01631"/>
    </source>
</evidence>
<name>GLMU_PASMU</name>
<comment type="function">
    <text evidence="1">Catalyzes the last two sequential reactions in the de novo biosynthetic pathway for UDP-N-acetylglucosamine (UDP-GlcNAc). The C-terminal domain catalyzes the transfer of acetyl group from acetyl coenzyme A to glucosamine-1-phosphate (GlcN-1-P) to produce N-acetylglucosamine-1-phosphate (GlcNAc-1-P), which is converted into UDP-GlcNAc by the transfer of uridine 5-monophosphate (from uridine 5-triphosphate), a reaction catalyzed by the N-terminal domain.</text>
</comment>
<comment type="catalytic activity">
    <reaction evidence="1">
        <text>alpha-D-glucosamine 1-phosphate + acetyl-CoA = N-acetyl-alpha-D-glucosamine 1-phosphate + CoA + H(+)</text>
        <dbReference type="Rhea" id="RHEA:13725"/>
        <dbReference type="ChEBI" id="CHEBI:15378"/>
        <dbReference type="ChEBI" id="CHEBI:57287"/>
        <dbReference type="ChEBI" id="CHEBI:57288"/>
        <dbReference type="ChEBI" id="CHEBI:57776"/>
        <dbReference type="ChEBI" id="CHEBI:58516"/>
        <dbReference type="EC" id="2.3.1.157"/>
    </reaction>
</comment>
<comment type="catalytic activity">
    <reaction evidence="1">
        <text>N-acetyl-alpha-D-glucosamine 1-phosphate + UTP + H(+) = UDP-N-acetyl-alpha-D-glucosamine + diphosphate</text>
        <dbReference type="Rhea" id="RHEA:13509"/>
        <dbReference type="ChEBI" id="CHEBI:15378"/>
        <dbReference type="ChEBI" id="CHEBI:33019"/>
        <dbReference type="ChEBI" id="CHEBI:46398"/>
        <dbReference type="ChEBI" id="CHEBI:57705"/>
        <dbReference type="ChEBI" id="CHEBI:57776"/>
        <dbReference type="EC" id="2.7.7.23"/>
    </reaction>
</comment>
<comment type="cofactor">
    <cofactor evidence="1">
        <name>Mg(2+)</name>
        <dbReference type="ChEBI" id="CHEBI:18420"/>
    </cofactor>
    <text evidence="1">Binds 1 Mg(2+) ion per subunit.</text>
</comment>
<comment type="pathway">
    <text evidence="1">Nucleotide-sugar biosynthesis; UDP-N-acetyl-alpha-D-glucosamine biosynthesis; N-acetyl-alpha-D-glucosamine 1-phosphate from alpha-D-glucosamine 6-phosphate (route II): step 2/2.</text>
</comment>
<comment type="pathway">
    <text evidence="1">Nucleotide-sugar biosynthesis; UDP-N-acetyl-alpha-D-glucosamine biosynthesis; UDP-N-acetyl-alpha-D-glucosamine from N-acetyl-alpha-D-glucosamine 1-phosphate: step 1/1.</text>
</comment>
<comment type="pathway">
    <text evidence="1">Bacterial outer membrane biogenesis; LPS lipid A biosynthesis.</text>
</comment>
<comment type="subunit">
    <text evidence="1">Homotrimer.</text>
</comment>
<comment type="subcellular location">
    <subcellularLocation>
        <location evidence="1">Cytoplasm</location>
    </subcellularLocation>
</comment>
<comment type="similarity">
    <text evidence="1">In the N-terminal section; belongs to the N-acetylglucosamine-1-phosphate uridyltransferase family.</text>
</comment>
<comment type="similarity">
    <text evidence="1">In the C-terminal section; belongs to the transferase hexapeptide repeat family.</text>
</comment>
<organism>
    <name type="scientific">Pasteurella multocida (strain Pm70)</name>
    <dbReference type="NCBI Taxonomy" id="272843"/>
    <lineage>
        <taxon>Bacteria</taxon>
        <taxon>Pseudomonadati</taxon>
        <taxon>Pseudomonadota</taxon>
        <taxon>Gammaproteobacteria</taxon>
        <taxon>Pasteurellales</taxon>
        <taxon>Pasteurellaceae</taxon>
        <taxon>Pasteurella</taxon>
    </lineage>
</organism>
<reference key="1">
    <citation type="journal article" date="2001" name="Proc. Natl. Acad. Sci. U.S.A.">
        <title>Complete genomic sequence of Pasteurella multocida Pm70.</title>
        <authorList>
            <person name="May B.J."/>
            <person name="Zhang Q."/>
            <person name="Li L.L."/>
            <person name="Paustian M.L."/>
            <person name="Whittam T.S."/>
            <person name="Kapur V."/>
        </authorList>
    </citation>
    <scope>NUCLEOTIDE SEQUENCE [LARGE SCALE GENOMIC DNA]</scope>
    <source>
        <strain>Pm70</strain>
    </source>
</reference>
<keyword id="KW-0012">Acyltransferase</keyword>
<keyword id="KW-0133">Cell shape</keyword>
<keyword id="KW-0961">Cell wall biogenesis/degradation</keyword>
<keyword id="KW-0963">Cytoplasm</keyword>
<keyword id="KW-0460">Magnesium</keyword>
<keyword id="KW-0479">Metal-binding</keyword>
<keyword id="KW-0511">Multifunctional enzyme</keyword>
<keyword id="KW-0548">Nucleotidyltransferase</keyword>
<keyword id="KW-0573">Peptidoglycan synthesis</keyword>
<keyword id="KW-1185">Reference proteome</keyword>
<keyword id="KW-0677">Repeat</keyword>
<keyword id="KW-0808">Transferase</keyword>
<gene>
    <name evidence="1" type="primary">glmU</name>
    <name type="ordered locus">PM1806</name>
</gene>
<dbReference type="EC" id="2.7.7.23" evidence="1"/>
<dbReference type="EC" id="2.3.1.157" evidence="1"/>
<dbReference type="EMBL" id="AE004439">
    <property type="protein sequence ID" value="AAK03890.1"/>
    <property type="molecule type" value="Genomic_DNA"/>
</dbReference>
<dbReference type="RefSeq" id="WP_010907349.1">
    <property type="nucleotide sequence ID" value="NC_002663.1"/>
</dbReference>
<dbReference type="SMR" id="Q9CK29"/>
<dbReference type="STRING" id="272843.PM1806"/>
<dbReference type="EnsemblBacteria" id="AAK03890">
    <property type="protein sequence ID" value="AAK03890"/>
    <property type="gene ID" value="PM1806"/>
</dbReference>
<dbReference type="KEGG" id="pmu:PM1806"/>
<dbReference type="PATRIC" id="fig|272843.6.peg.1830"/>
<dbReference type="HOGENOM" id="CLU_029499_15_2_6"/>
<dbReference type="OrthoDB" id="9775031at2"/>
<dbReference type="UniPathway" id="UPA00113">
    <property type="reaction ID" value="UER00532"/>
</dbReference>
<dbReference type="UniPathway" id="UPA00113">
    <property type="reaction ID" value="UER00533"/>
</dbReference>
<dbReference type="UniPathway" id="UPA00973"/>
<dbReference type="Proteomes" id="UP000000809">
    <property type="component" value="Chromosome"/>
</dbReference>
<dbReference type="GO" id="GO:0005737">
    <property type="term" value="C:cytoplasm"/>
    <property type="evidence" value="ECO:0007669"/>
    <property type="project" value="UniProtKB-SubCell"/>
</dbReference>
<dbReference type="GO" id="GO:0016020">
    <property type="term" value="C:membrane"/>
    <property type="evidence" value="ECO:0007669"/>
    <property type="project" value="GOC"/>
</dbReference>
<dbReference type="GO" id="GO:0019134">
    <property type="term" value="F:glucosamine-1-phosphate N-acetyltransferase activity"/>
    <property type="evidence" value="ECO:0007669"/>
    <property type="project" value="UniProtKB-UniRule"/>
</dbReference>
<dbReference type="GO" id="GO:0000287">
    <property type="term" value="F:magnesium ion binding"/>
    <property type="evidence" value="ECO:0007669"/>
    <property type="project" value="UniProtKB-UniRule"/>
</dbReference>
<dbReference type="GO" id="GO:0003977">
    <property type="term" value="F:UDP-N-acetylglucosamine diphosphorylase activity"/>
    <property type="evidence" value="ECO:0007669"/>
    <property type="project" value="UniProtKB-UniRule"/>
</dbReference>
<dbReference type="GO" id="GO:0000902">
    <property type="term" value="P:cell morphogenesis"/>
    <property type="evidence" value="ECO:0007669"/>
    <property type="project" value="UniProtKB-UniRule"/>
</dbReference>
<dbReference type="GO" id="GO:0071555">
    <property type="term" value="P:cell wall organization"/>
    <property type="evidence" value="ECO:0007669"/>
    <property type="project" value="UniProtKB-KW"/>
</dbReference>
<dbReference type="GO" id="GO:0009245">
    <property type="term" value="P:lipid A biosynthetic process"/>
    <property type="evidence" value="ECO:0007669"/>
    <property type="project" value="UniProtKB-UniRule"/>
</dbReference>
<dbReference type="GO" id="GO:0009252">
    <property type="term" value="P:peptidoglycan biosynthetic process"/>
    <property type="evidence" value="ECO:0007669"/>
    <property type="project" value="UniProtKB-UniRule"/>
</dbReference>
<dbReference type="GO" id="GO:0008360">
    <property type="term" value="P:regulation of cell shape"/>
    <property type="evidence" value="ECO:0007669"/>
    <property type="project" value="UniProtKB-KW"/>
</dbReference>
<dbReference type="GO" id="GO:0006048">
    <property type="term" value="P:UDP-N-acetylglucosamine biosynthetic process"/>
    <property type="evidence" value="ECO:0007669"/>
    <property type="project" value="UniProtKB-UniPathway"/>
</dbReference>
<dbReference type="CDD" id="cd02540">
    <property type="entry name" value="GT2_GlmU_N_bac"/>
    <property type="match status" value="1"/>
</dbReference>
<dbReference type="CDD" id="cd03353">
    <property type="entry name" value="LbH_GlmU_C"/>
    <property type="match status" value="1"/>
</dbReference>
<dbReference type="FunFam" id="3.90.550.10:FF:000006">
    <property type="entry name" value="Bifunctional protein GlmU"/>
    <property type="match status" value="1"/>
</dbReference>
<dbReference type="Gene3D" id="2.160.10.10">
    <property type="entry name" value="Hexapeptide repeat proteins"/>
    <property type="match status" value="1"/>
</dbReference>
<dbReference type="Gene3D" id="3.90.550.10">
    <property type="entry name" value="Spore Coat Polysaccharide Biosynthesis Protein SpsA, Chain A"/>
    <property type="match status" value="1"/>
</dbReference>
<dbReference type="HAMAP" id="MF_01631">
    <property type="entry name" value="GlmU"/>
    <property type="match status" value="1"/>
</dbReference>
<dbReference type="InterPro" id="IPR005882">
    <property type="entry name" value="Bifunctional_GlmU"/>
</dbReference>
<dbReference type="InterPro" id="IPR050065">
    <property type="entry name" value="GlmU-like"/>
</dbReference>
<dbReference type="InterPro" id="IPR038009">
    <property type="entry name" value="GlmU_C_LbH"/>
</dbReference>
<dbReference type="InterPro" id="IPR001451">
    <property type="entry name" value="Hexapep"/>
</dbReference>
<dbReference type="InterPro" id="IPR018357">
    <property type="entry name" value="Hexapep_transf_CS"/>
</dbReference>
<dbReference type="InterPro" id="IPR025877">
    <property type="entry name" value="MobA-like_NTP_Trfase"/>
</dbReference>
<dbReference type="InterPro" id="IPR029044">
    <property type="entry name" value="Nucleotide-diphossugar_trans"/>
</dbReference>
<dbReference type="InterPro" id="IPR011004">
    <property type="entry name" value="Trimer_LpxA-like_sf"/>
</dbReference>
<dbReference type="NCBIfam" id="TIGR01173">
    <property type="entry name" value="glmU"/>
    <property type="match status" value="1"/>
</dbReference>
<dbReference type="NCBIfam" id="NF006986">
    <property type="entry name" value="PRK09451.1"/>
    <property type="match status" value="1"/>
</dbReference>
<dbReference type="PANTHER" id="PTHR43584:SF3">
    <property type="entry name" value="BIFUNCTIONAL PROTEIN GLMU"/>
    <property type="match status" value="1"/>
</dbReference>
<dbReference type="PANTHER" id="PTHR43584">
    <property type="entry name" value="NUCLEOTIDYL TRANSFERASE"/>
    <property type="match status" value="1"/>
</dbReference>
<dbReference type="Pfam" id="PF00132">
    <property type="entry name" value="Hexapep"/>
    <property type="match status" value="1"/>
</dbReference>
<dbReference type="Pfam" id="PF12804">
    <property type="entry name" value="NTP_transf_3"/>
    <property type="match status" value="1"/>
</dbReference>
<dbReference type="SUPFAM" id="SSF53448">
    <property type="entry name" value="Nucleotide-diphospho-sugar transferases"/>
    <property type="match status" value="1"/>
</dbReference>
<dbReference type="SUPFAM" id="SSF51161">
    <property type="entry name" value="Trimeric LpxA-like enzymes"/>
    <property type="match status" value="1"/>
</dbReference>
<dbReference type="PROSITE" id="PS00101">
    <property type="entry name" value="HEXAPEP_TRANSFERASES"/>
    <property type="match status" value="1"/>
</dbReference>
<proteinExistence type="inferred from homology"/>
<sequence>MKEKALSIVILAAGKGTRMYSDLPKVLHKIAGKPMVKHVIDTVKSIHAKNIHLVYGHGGEVMQTRLQDEPVNWVLQAEQLGTGHAMQQAAPFFADDENILMLYGDGPLITAETLQTLIAAKPEHGIALLTVVLDDPTGYGRIVRENGNVVAIVEQKDANAEQLKIQEINTGLLVADGKSLKKWLSQLTNNNAQGEYYITDVIALANQDGCQVVAVQASDFMEVEGVNNRQQLARLERYYQRKQADNLLLAGVALADPERFDLRGELSHGKDVEIDVNVIIEGKVSLGHRVKIGAGCVLKNCQIGDDVEIKPYSVLEEAIVGQAAQIGPFSRLRPGTALADNTHIGNFVEIKKAHIGTGSKVNHLSYVGDAEVGMQCNIGAGVITCNYDGANKFKTIIGDNVFVGSDVQLVAPVTIETGATIGAGTTVTKDVACDELVISRVPQRHIQGWQRPTKQTKK</sequence>